<accession>O23247</accession>
<organism>
    <name type="scientific">Arabidopsis thaliana</name>
    <name type="common">Mouse-ear cress</name>
    <dbReference type="NCBI Taxonomy" id="3702"/>
    <lineage>
        <taxon>Eukaryota</taxon>
        <taxon>Viridiplantae</taxon>
        <taxon>Streptophyta</taxon>
        <taxon>Embryophyta</taxon>
        <taxon>Tracheophyta</taxon>
        <taxon>Spermatophyta</taxon>
        <taxon>Magnoliopsida</taxon>
        <taxon>eudicotyledons</taxon>
        <taxon>Gunneridae</taxon>
        <taxon>Pentapetalae</taxon>
        <taxon>rosids</taxon>
        <taxon>malvids</taxon>
        <taxon>Brassicales</taxon>
        <taxon>Brassicaceae</taxon>
        <taxon>Camelineae</taxon>
        <taxon>Arabidopsis</taxon>
    </lineage>
</organism>
<feature type="transit peptide" description="Chloroplast and mitochondrion" evidence="9">
    <location>
        <begin position="1"/>
        <end position="53"/>
    </location>
</feature>
<feature type="chain" id="PRO_0000433552" description="Arginine--tRNA ligase, chloroplastic/mitochondrial" evidence="5">
    <location>
        <begin position="54"/>
        <end position="642"/>
    </location>
</feature>
<feature type="short sequence motif" description="'HIGH' region" evidence="5">
    <location>
        <begin position="190"/>
        <end position="201"/>
    </location>
</feature>
<feature type="modified residue" description="N-acetylalanine" evidence="9">
    <location>
        <position position="54"/>
    </location>
</feature>
<comment type="function">
    <text evidence="1">Forms part of a macromolecular complex that catalyzes the attachment of specific amino acids to cognate tRNAs during protein synthesis.</text>
</comment>
<comment type="catalytic activity">
    <reaction evidence="5">
        <text>tRNA(Arg) + L-arginine + ATP = L-arginyl-tRNA(Arg) + AMP + diphosphate</text>
        <dbReference type="Rhea" id="RHEA:20301"/>
        <dbReference type="Rhea" id="RHEA-COMP:9658"/>
        <dbReference type="Rhea" id="RHEA-COMP:9673"/>
        <dbReference type="ChEBI" id="CHEBI:30616"/>
        <dbReference type="ChEBI" id="CHEBI:32682"/>
        <dbReference type="ChEBI" id="CHEBI:33019"/>
        <dbReference type="ChEBI" id="CHEBI:78442"/>
        <dbReference type="ChEBI" id="CHEBI:78513"/>
        <dbReference type="ChEBI" id="CHEBI:456215"/>
        <dbReference type="EC" id="6.1.1.19"/>
    </reaction>
</comment>
<comment type="subcellular location">
    <subcellularLocation>
        <location evidence="3">Plastid</location>
        <location evidence="3">Chloroplast</location>
    </subcellularLocation>
    <subcellularLocation>
        <location evidence="2">Mitochondrion</location>
    </subcellularLocation>
</comment>
<comment type="disruption phenotype">
    <text evidence="6">Embryo defective. Developmental arrest of the embryo at the globular stage.</text>
</comment>
<comment type="similarity">
    <text evidence="5">Belongs to the class-I aminoacyl-tRNA synthetase family.</text>
</comment>
<proteinExistence type="evidence at protein level"/>
<keyword id="KW-0007">Acetylation</keyword>
<keyword id="KW-0030">Aminoacyl-tRNA synthetase</keyword>
<keyword id="KW-0067">ATP-binding</keyword>
<keyword id="KW-0150">Chloroplast</keyword>
<keyword id="KW-0436">Ligase</keyword>
<keyword id="KW-0496">Mitochondrion</keyword>
<keyword id="KW-0547">Nucleotide-binding</keyword>
<keyword id="KW-0934">Plastid</keyword>
<keyword id="KW-0648">Protein biosynthesis</keyword>
<keyword id="KW-1185">Reference proteome</keyword>
<keyword id="KW-0809">Transit peptide</keyword>
<reference key="1">
    <citation type="submission" date="1997-08" db="EMBL/GenBank/DDBJ databases">
        <title>Duplicated arginyl-tRNA synthetase genes in Arabidopsis thaliana.</title>
        <authorList>
            <person name="Small I.D."/>
            <person name="Lancelin D."/>
        </authorList>
    </citation>
    <scope>NUCLEOTIDE SEQUENCE [GENOMIC DNA]</scope>
</reference>
<reference key="2">
    <citation type="journal article" date="1999" name="Nature">
        <title>Sequence and analysis of chromosome 4 of the plant Arabidopsis thaliana.</title>
        <authorList>
            <person name="Mayer K.F.X."/>
            <person name="Schueller C."/>
            <person name="Wambutt R."/>
            <person name="Murphy G."/>
            <person name="Volckaert G."/>
            <person name="Pohl T."/>
            <person name="Duesterhoeft A."/>
            <person name="Stiekema W."/>
            <person name="Entian K.-D."/>
            <person name="Terryn N."/>
            <person name="Harris B."/>
            <person name="Ansorge W."/>
            <person name="Brandt P."/>
            <person name="Grivell L.A."/>
            <person name="Rieger M."/>
            <person name="Weichselgartner M."/>
            <person name="de Simone V."/>
            <person name="Obermaier B."/>
            <person name="Mache R."/>
            <person name="Mueller M."/>
            <person name="Kreis M."/>
            <person name="Delseny M."/>
            <person name="Puigdomenech P."/>
            <person name="Watson M."/>
            <person name="Schmidtheini T."/>
            <person name="Reichert B."/>
            <person name="Portetelle D."/>
            <person name="Perez-Alonso M."/>
            <person name="Boutry M."/>
            <person name="Bancroft I."/>
            <person name="Vos P."/>
            <person name="Hoheisel J."/>
            <person name="Zimmermann W."/>
            <person name="Wedler H."/>
            <person name="Ridley P."/>
            <person name="Langham S.-A."/>
            <person name="McCullagh B."/>
            <person name="Bilham L."/>
            <person name="Robben J."/>
            <person name="van der Schueren J."/>
            <person name="Grymonprez B."/>
            <person name="Chuang Y.-J."/>
            <person name="Vandenbussche F."/>
            <person name="Braeken M."/>
            <person name="Weltjens I."/>
            <person name="Voet M."/>
            <person name="Bastiaens I."/>
            <person name="Aert R."/>
            <person name="Defoor E."/>
            <person name="Weitzenegger T."/>
            <person name="Bothe G."/>
            <person name="Ramsperger U."/>
            <person name="Hilbert H."/>
            <person name="Braun M."/>
            <person name="Holzer E."/>
            <person name="Brandt A."/>
            <person name="Peters S."/>
            <person name="van Staveren M."/>
            <person name="Dirkse W."/>
            <person name="Mooijman P."/>
            <person name="Klein Lankhorst R."/>
            <person name="Rose M."/>
            <person name="Hauf J."/>
            <person name="Koetter P."/>
            <person name="Berneiser S."/>
            <person name="Hempel S."/>
            <person name="Feldpausch M."/>
            <person name="Lamberth S."/>
            <person name="Van den Daele H."/>
            <person name="De Keyser A."/>
            <person name="Buysshaert C."/>
            <person name="Gielen J."/>
            <person name="Villarroel R."/>
            <person name="De Clercq R."/>
            <person name="van Montagu M."/>
            <person name="Rogers J."/>
            <person name="Cronin A."/>
            <person name="Quail M.A."/>
            <person name="Bray-Allen S."/>
            <person name="Clark L."/>
            <person name="Doggett J."/>
            <person name="Hall S."/>
            <person name="Kay M."/>
            <person name="Lennard N."/>
            <person name="McLay K."/>
            <person name="Mayes R."/>
            <person name="Pettett A."/>
            <person name="Rajandream M.A."/>
            <person name="Lyne M."/>
            <person name="Benes V."/>
            <person name="Rechmann S."/>
            <person name="Borkova D."/>
            <person name="Bloecker H."/>
            <person name="Scharfe M."/>
            <person name="Grimm M."/>
            <person name="Loehnert T.-H."/>
            <person name="Dose S."/>
            <person name="de Haan M."/>
            <person name="Maarse A.C."/>
            <person name="Schaefer M."/>
            <person name="Mueller-Auer S."/>
            <person name="Gabel C."/>
            <person name="Fuchs M."/>
            <person name="Fartmann B."/>
            <person name="Granderath K."/>
            <person name="Dauner D."/>
            <person name="Herzl A."/>
            <person name="Neumann S."/>
            <person name="Argiriou A."/>
            <person name="Vitale D."/>
            <person name="Liguori R."/>
            <person name="Piravandi E."/>
            <person name="Massenet O."/>
            <person name="Quigley F."/>
            <person name="Clabauld G."/>
            <person name="Muendlein A."/>
            <person name="Felber R."/>
            <person name="Schnabl S."/>
            <person name="Hiller R."/>
            <person name="Schmidt W."/>
            <person name="Lecharny A."/>
            <person name="Aubourg S."/>
            <person name="Chefdor F."/>
            <person name="Cooke R."/>
            <person name="Berger C."/>
            <person name="Monfort A."/>
            <person name="Casacuberta E."/>
            <person name="Gibbons T."/>
            <person name="Weber N."/>
            <person name="Vandenbol M."/>
            <person name="Bargues M."/>
            <person name="Terol J."/>
            <person name="Torres A."/>
            <person name="Perez-Perez A."/>
            <person name="Purnelle B."/>
            <person name="Bent E."/>
            <person name="Johnson S."/>
            <person name="Tacon D."/>
            <person name="Jesse T."/>
            <person name="Heijnen L."/>
            <person name="Schwarz S."/>
            <person name="Scholler P."/>
            <person name="Heber S."/>
            <person name="Francs P."/>
            <person name="Bielke C."/>
            <person name="Frishman D."/>
            <person name="Haase D."/>
            <person name="Lemcke K."/>
            <person name="Mewes H.-W."/>
            <person name="Stocker S."/>
            <person name="Zaccaria P."/>
            <person name="Bevan M."/>
            <person name="Wilson R.K."/>
            <person name="de la Bastide M."/>
            <person name="Habermann K."/>
            <person name="Parnell L."/>
            <person name="Dedhia N."/>
            <person name="Gnoj L."/>
            <person name="Schutz K."/>
            <person name="Huang E."/>
            <person name="Spiegel L."/>
            <person name="Sekhon M."/>
            <person name="Murray J."/>
            <person name="Sheet P."/>
            <person name="Cordes M."/>
            <person name="Abu-Threideh J."/>
            <person name="Stoneking T."/>
            <person name="Kalicki J."/>
            <person name="Graves T."/>
            <person name="Harmon G."/>
            <person name="Edwards J."/>
            <person name="Latreille P."/>
            <person name="Courtney L."/>
            <person name="Cloud J."/>
            <person name="Abbott A."/>
            <person name="Scott K."/>
            <person name="Johnson D."/>
            <person name="Minx P."/>
            <person name="Bentley D."/>
            <person name="Fulton B."/>
            <person name="Miller N."/>
            <person name="Greco T."/>
            <person name="Kemp K."/>
            <person name="Kramer J."/>
            <person name="Fulton L."/>
            <person name="Mardis E."/>
            <person name="Dante M."/>
            <person name="Pepin K."/>
            <person name="Hillier L.W."/>
            <person name="Nelson J."/>
            <person name="Spieth J."/>
            <person name="Ryan E."/>
            <person name="Andrews S."/>
            <person name="Geisel C."/>
            <person name="Layman D."/>
            <person name="Du H."/>
            <person name="Ali J."/>
            <person name="Berghoff A."/>
            <person name="Jones K."/>
            <person name="Drone K."/>
            <person name="Cotton M."/>
            <person name="Joshu C."/>
            <person name="Antonoiu B."/>
            <person name="Zidanic M."/>
            <person name="Strong C."/>
            <person name="Sun H."/>
            <person name="Lamar B."/>
            <person name="Yordan C."/>
            <person name="Ma P."/>
            <person name="Zhong J."/>
            <person name="Preston R."/>
            <person name="Vil D."/>
            <person name="Shekher M."/>
            <person name="Matero A."/>
            <person name="Shah R."/>
            <person name="Swaby I.K."/>
            <person name="O'Shaughnessy A."/>
            <person name="Rodriguez M."/>
            <person name="Hoffman J."/>
            <person name="Till S."/>
            <person name="Granat S."/>
            <person name="Shohdy N."/>
            <person name="Hasegawa A."/>
            <person name="Hameed A."/>
            <person name="Lodhi M."/>
            <person name="Johnson A."/>
            <person name="Chen E."/>
            <person name="Marra M.A."/>
            <person name="Martienssen R."/>
            <person name="McCombie W.R."/>
        </authorList>
    </citation>
    <scope>NUCLEOTIDE SEQUENCE [LARGE SCALE GENOMIC DNA]</scope>
    <source>
        <strain>cv. Columbia</strain>
    </source>
</reference>
<reference key="3">
    <citation type="journal article" date="2017" name="Plant J.">
        <title>Araport11: a complete reannotation of the Arabidopsis thaliana reference genome.</title>
        <authorList>
            <person name="Cheng C.Y."/>
            <person name="Krishnakumar V."/>
            <person name="Chan A.P."/>
            <person name="Thibaud-Nissen F."/>
            <person name="Schobel S."/>
            <person name="Town C.D."/>
        </authorList>
    </citation>
    <scope>GENOME REANNOTATION</scope>
    <source>
        <strain>cv. Columbia</strain>
    </source>
</reference>
<reference key="4">
    <citation type="journal article" date="2005" name="Plant J.">
        <title>Requirement of aminoacyl-tRNA synthetases for gametogenesis and embryo development in Arabidopsis.</title>
        <authorList>
            <person name="Berg M."/>
            <person name="Rogers R."/>
            <person name="Muralla R."/>
            <person name="Meinke D."/>
        </authorList>
    </citation>
    <scope>DISRUPTION PHENOTYPE</scope>
</reference>
<reference key="5">
    <citation type="journal article" date="2005" name="Proc. Natl. Acad. Sci. U.S.A.">
        <title>Dual targeting is the rule for organellar aminoacyl-tRNA synthetases in Arabidopsis thaliana.</title>
        <authorList>
            <person name="Duchene A.-M."/>
            <person name="Giritch A."/>
            <person name="Hoffmann B."/>
            <person name="Cognat V."/>
            <person name="Lancelin D."/>
            <person name="Peeters N.M."/>
            <person name="Zaepfel M."/>
            <person name="Marechal-Drouard L."/>
            <person name="Small I.D."/>
        </authorList>
    </citation>
    <scope>SUBCELLULAR LOCATION</scope>
</reference>
<reference key="6">
    <citation type="journal article" date="2012" name="Mol. Cell. Proteomics">
        <title>Comparative large-scale characterisation of plant vs. mammal proteins reveals similar and idiosyncratic N-alpha acetylation features.</title>
        <authorList>
            <person name="Bienvenut W.V."/>
            <person name="Sumpton D."/>
            <person name="Martinez A."/>
            <person name="Lilla S."/>
            <person name="Espagne C."/>
            <person name="Meinnel T."/>
            <person name="Giglione C."/>
        </authorList>
    </citation>
    <scope>ACETYLATION [LARGE SCALE ANALYSIS] AT ALA-54</scope>
    <scope>CLEAVAGE OF TRANSIT PEPTIDE [LARGE SCALE ANALYSIS] AFTER MET-53</scope>
    <scope>IDENTIFICATION BY MASS SPECTROMETRY [LARGE SCALE ANALYSIS]</scope>
</reference>
<dbReference type="EC" id="6.1.1.19" evidence="5"/>
<dbReference type="EMBL" id="Z98760">
    <property type="protein sequence ID" value="CAB11468.1"/>
    <property type="molecule type" value="Genomic_DNA"/>
</dbReference>
<dbReference type="EMBL" id="AL049171">
    <property type="protein sequence ID" value="CAB38959.1"/>
    <property type="molecule type" value="Genomic_DNA"/>
</dbReference>
<dbReference type="EMBL" id="AL161565">
    <property type="protein sequence ID" value="CAB79485.1"/>
    <property type="molecule type" value="Genomic_DNA"/>
</dbReference>
<dbReference type="EMBL" id="CP002687">
    <property type="protein sequence ID" value="AEE85182.1"/>
    <property type="molecule type" value="Genomic_DNA"/>
</dbReference>
<dbReference type="PIR" id="T06014">
    <property type="entry name" value="T06014"/>
</dbReference>
<dbReference type="RefSeq" id="NP_194360.1">
    <property type="nucleotide sequence ID" value="NM_118763.3"/>
</dbReference>
<dbReference type="SMR" id="O23247"/>
<dbReference type="FunCoup" id="O23247">
    <property type="interactions" value="4188"/>
</dbReference>
<dbReference type="STRING" id="3702.O23247"/>
<dbReference type="iPTMnet" id="O23247"/>
<dbReference type="PaxDb" id="3702-AT4G26300.1"/>
<dbReference type="EnsemblPlants" id="AT4G26300.1">
    <property type="protein sequence ID" value="AT4G26300.1"/>
    <property type="gene ID" value="AT4G26300"/>
</dbReference>
<dbReference type="GeneID" id="828736"/>
<dbReference type="Gramene" id="AT4G26300.1">
    <property type="protein sequence ID" value="AT4G26300.1"/>
    <property type="gene ID" value="AT4G26300"/>
</dbReference>
<dbReference type="KEGG" id="ath:AT4G26300"/>
<dbReference type="Araport" id="AT4G26300"/>
<dbReference type="TAIR" id="AT4G26300">
    <property type="gene designation" value="EMB1027"/>
</dbReference>
<dbReference type="eggNOG" id="KOG4426">
    <property type="taxonomic scope" value="Eukaryota"/>
</dbReference>
<dbReference type="HOGENOM" id="CLU_006406_5_1_1"/>
<dbReference type="InParanoid" id="O23247"/>
<dbReference type="OrthoDB" id="68056at2759"/>
<dbReference type="PhylomeDB" id="O23247"/>
<dbReference type="PRO" id="PR:O23247"/>
<dbReference type="Proteomes" id="UP000006548">
    <property type="component" value="Chromosome 4"/>
</dbReference>
<dbReference type="ExpressionAtlas" id="O23247">
    <property type="expression patterns" value="baseline and differential"/>
</dbReference>
<dbReference type="GO" id="GO:0009507">
    <property type="term" value="C:chloroplast"/>
    <property type="evidence" value="ECO:0000314"/>
    <property type="project" value="TAIR"/>
</dbReference>
<dbReference type="GO" id="GO:0009570">
    <property type="term" value="C:chloroplast stroma"/>
    <property type="evidence" value="ECO:0007005"/>
    <property type="project" value="TAIR"/>
</dbReference>
<dbReference type="GO" id="GO:0005829">
    <property type="term" value="C:cytosol"/>
    <property type="evidence" value="ECO:0007005"/>
    <property type="project" value="TAIR"/>
</dbReference>
<dbReference type="GO" id="GO:0005739">
    <property type="term" value="C:mitochondrion"/>
    <property type="evidence" value="ECO:0000314"/>
    <property type="project" value="TAIR"/>
</dbReference>
<dbReference type="GO" id="GO:0004814">
    <property type="term" value="F:arginine-tRNA ligase activity"/>
    <property type="evidence" value="ECO:0007669"/>
    <property type="project" value="UniProtKB-EC"/>
</dbReference>
<dbReference type="GO" id="GO:0005524">
    <property type="term" value="F:ATP binding"/>
    <property type="evidence" value="ECO:0007669"/>
    <property type="project" value="UniProtKB-KW"/>
</dbReference>
<dbReference type="GO" id="GO:0006420">
    <property type="term" value="P:arginyl-tRNA aminoacylation"/>
    <property type="evidence" value="ECO:0007669"/>
    <property type="project" value="InterPro"/>
</dbReference>
<dbReference type="GO" id="GO:0009793">
    <property type="term" value="P:embryo development ending in seed dormancy"/>
    <property type="evidence" value="ECO:0000315"/>
    <property type="project" value="TAIR"/>
</dbReference>
<dbReference type="CDD" id="cd07956">
    <property type="entry name" value="Anticodon_Ia_Arg"/>
    <property type="match status" value="1"/>
</dbReference>
<dbReference type="CDD" id="cd00671">
    <property type="entry name" value="ArgRS_core"/>
    <property type="match status" value="1"/>
</dbReference>
<dbReference type="FunFam" id="3.40.50.620:FF:000096">
    <property type="entry name" value="Arginine--tRNA ligase chloroplastic/mitochondrial"/>
    <property type="match status" value="1"/>
</dbReference>
<dbReference type="FunFam" id="1.10.730.10:FF:000017">
    <property type="entry name" value="Arginine--tRNA ligase, chloroplastic/mitochondrial"/>
    <property type="match status" value="1"/>
</dbReference>
<dbReference type="FunFam" id="3.30.1360.70:FF:000002">
    <property type="entry name" value="arginine--tRNA ligase, cytoplasmic"/>
    <property type="match status" value="1"/>
</dbReference>
<dbReference type="Gene3D" id="3.30.1360.70">
    <property type="entry name" value="Arginyl tRNA synthetase N-terminal domain"/>
    <property type="match status" value="1"/>
</dbReference>
<dbReference type="Gene3D" id="3.40.50.620">
    <property type="entry name" value="HUPs"/>
    <property type="match status" value="1"/>
</dbReference>
<dbReference type="Gene3D" id="1.10.730.10">
    <property type="entry name" value="Isoleucyl-tRNA Synthetase, Domain 1"/>
    <property type="match status" value="1"/>
</dbReference>
<dbReference type="HAMAP" id="MF_00123">
    <property type="entry name" value="Arg_tRNA_synth"/>
    <property type="match status" value="1"/>
</dbReference>
<dbReference type="InterPro" id="IPR001412">
    <property type="entry name" value="aa-tRNA-synth_I_CS"/>
</dbReference>
<dbReference type="InterPro" id="IPR001278">
    <property type="entry name" value="Arg-tRNA-ligase"/>
</dbReference>
<dbReference type="InterPro" id="IPR005148">
    <property type="entry name" value="Arg-tRNA-synth_N"/>
</dbReference>
<dbReference type="InterPro" id="IPR036695">
    <property type="entry name" value="Arg-tRNA-synth_N_sf"/>
</dbReference>
<dbReference type="InterPro" id="IPR035684">
    <property type="entry name" value="ArgRS_core"/>
</dbReference>
<dbReference type="InterPro" id="IPR008909">
    <property type="entry name" value="DALR_anticod-bd"/>
</dbReference>
<dbReference type="InterPro" id="IPR014729">
    <property type="entry name" value="Rossmann-like_a/b/a_fold"/>
</dbReference>
<dbReference type="InterPro" id="IPR009080">
    <property type="entry name" value="tRNAsynth_Ia_anticodon-bd"/>
</dbReference>
<dbReference type="NCBIfam" id="TIGR00456">
    <property type="entry name" value="argS"/>
    <property type="match status" value="1"/>
</dbReference>
<dbReference type="PANTHER" id="PTHR11956:SF5">
    <property type="entry name" value="ARGININE--TRNA LIGASE, CYTOPLASMIC"/>
    <property type="match status" value="1"/>
</dbReference>
<dbReference type="PANTHER" id="PTHR11956">
    <property type="entry name" value="ARGINYL-TRNA SYNTHETASE"/>
    <property type="match status" value="1"/>
</dbReference>
<dbReference type="Pfam" id="PF03485">
    <property type="entry name" value="Arg_tRNA_synt_N"/>
    <property type="match status" value="1"/>
</dbReference>
<dbReference type="Pfam" id="PF05746">
    <property type="entry name" value="DALR_1"/>
    <property type="match status" value="1"/>
</dbReference>
<dbReference type="Pfam" id="PF00750">
    <property type="entry name" value="tRNA-synt_1d"/>
    <property type="match status" value="1"/>
</dbReference>
<dbReference type="PRINTS" id="PR01038">
    <property type="entry name" value="TRNASYNTHARG"/>
</dbReference>
<dbReference type="SMART" id="SM01016">
    <property type="entry name" value="Arg_tRNA_synt_N"/>
    <property type="match status" value="1"/>
</dbReference>
<dbReference type="SMART" id="SM00836">
    <property type="entry name" value="DALR_1"/>
    <property type="match status" value="1"/>
</dbReference>
<dbReference type="SUPFAM" id="SSF47323">
    <property type="entry name" value="Anticodon-binding domain of a subclass of class I aminoacyl-tRNA synthetases"/>
    <property type="match status" value="1"/>
</dbReference>
<dbReference type="SUPFAM" id="SSF55190">
    <property type="entry name" value="Arginyl-tRNA synthetase (ArgRS), N-terminal 'additional' domain"/>
    <property type="match status" value="1"/>
</dbReference>
<dbReference type="SUPFAM" id="SSF52374">
    <property type="entry name" value="Nucleotidylyl transferase"/>
    <property type="match status" value="1"/>
</dbReference>
<dbReference type="PROSITE" id="PS00178">
    <property type="entry name" value="AA_TRNA_LIGASE_I"/>
    <property type="match status" value="1"/>
</dbReference>
<name>SYRM_ARATH</name>
<protein>
    <recommendedName>
        <fullName evidence="5">Arginine--tRNA ligase, chloroplastic/mitochondrial</fullName>
        <ecNumber evidence="5">6.1.1.19</ecNumber>
    </recommendedName>
    <alternativeName>
        <fullName evidence="5">Arginyl-tRNA synthetase</fullName>
        <shortName evidence="5">ArgRS</shortName>
    </alternativeName>
    <alternativeName>
        <fullName evidence="4">Protein EMBRYO DEFECTIVE 1027</fullName>
    </alternativeName>
</protein>
<sequence length="642" mass="72387">MFIFPKDENRRETLTTKLRFSADHLTFTTVTEKLRATAWRFAFSSRAKSVVAMAANEEFTGNLKRQLAKLFDVSLKLTVPDEPSVEPLVAASALGKFGDYQCNNAMGLWSIIKGKGTQFKGPPAVGQALVKSLPTSEMVESCSVAGPGFINVVLSAKWMAKSIENMLIDGVDTWAPTLSVKRAVVDFSSPNIAKEMHVGHLRSTIIGDTLARMLEYSHVEVLRRNHVGDWGTQFGMLIEYLFEKFPDTDSVTETAIGDLQVFYKASKHKFDLDEAFKEKAQQAVVRLQGGDPVYRKAWAKICDISRTEFAKVYQRLRVELEEKGESFYNPHIAKVIEELNSKGLVEESEGARVIFLEGFDIPLMVVKSDGGFNYASTDLTALWYRLNEEKAEWIIYVTDVGQQQHFNMFFKAARKAGWLPDNDKTYPRVNHVGFGLVLGEDGKRFRTRATDVVRLVDLLDEAKTRSKLALIERGKDKEWTPEELDQTAEAVGYGAVKYADLKNNRLTNYTFSFDQMLNDKGNTAVYLLYAHARICSIIRKSGKDIDELKKTGKLALDHADERALGLHLLRFAETVEEACTNLLPSVLCEYLYNLSEHFTRFYSNCQVNGSPEETSRLLLCEATAIVMRKCFHLLGITPVYKI</sequence>
<gene>
    <name evidence="4" type="primary">EMB1027</name>
    <name evidence="7" type="ordered locus">At4g26300</name>
    <name evidence="8" type="ORF">T25K17.110</name>
</gene>
<evidence type="ECO:0000250" key="1">
    <source>
        <dbReference type="UniProtKB" id="P54136"/>
    </source>
</evidence>
<evidence type="ECO:0000250" key="2">
    <source>
        <dbReference type="UniProtKB" id="Q8RXK8"/>
    </source>
</evidence>
<evidence type="ECO:0000269" key="3">
    <source>
    </source>
</evidence>
<evidence type="ECO:0000303" key="4">
    <source>
    </source>
</evidence>
<evidence type="ECO:0000305" key="5"/>
<evidence type="ECO:0000305" key="6">
    <source>
    </source>
</evidence>
<evidence type="ECO:0000312" key="7">
    <source>
        <dbReference type="Araport" id="AT4G26300"/>
    </source>
</evidence>
<evidence type="ECO:0000312" key="8">
    <source>
        <dbReference type="EMBL" id="CAB38959.1"/>
    </source>
</evidence>
<evidence type="ECO:0007744" key="9">
    <source>
    </source>
</evidence>